<keyword id="KW-1185">Reference proteome</keyword>
<organism>
    <name type="scientific">Burkholderia pseudomallei (strain K96243)</name>
    <dbReference type="NCBI Taxonomy" id="272560"/>
    <lineage>
        <taxon>Bacteria</taxon>
        <taxon>Pseudomonadati</taxon>
        <taxon>Pseudomonadota</taxon>
        <taxon>Betaproteobacteria</taxon>
        <taxon>Burkholderiales</taxon>
        <taxon>Burkholderiaceae</taxon>
        <taxon>Burkholderia</taxon>
        <taxon>pseudomallei group</taxon>
    </lineage>
</organism>
<evidence type="ECO:0000255" key="1">
    <source>
        <dbReference type="HAMAP-Rule" id="MF_00338"/>
    </source>
</evidence>
<sequence length="111" mass="11953">MADPQLITTAFDIPGYRIERSLGVARGIVVRSRSIVGTFGASIQTLFGGNISLYTSLCERARQDAYERMIDEARRMGGNAIVGMRYDATEIASGVTEVLCYGTAVQAVRAG</sequence>
<comment type="similarity">
    <text evidence="1">Belongs to the UPF0145 family.</text>
</comment>
<reference key="1">
    <citation type="journal article" date="2004" name="Proc. Natl. Acad. Sci. U.S.A.">
        <title>Genomic plasticity of the causative agent of melioidosis, Burkholderia pseudomallei.</title>
        <authorList>
            <person name="Holden M.T.G."/>
            <person name="Titball R.W."/>
            <person name="Peacock S.J."/>
            <person name="Cerdeno-Tarraga A.-M."/>
            <person name="Atkins T."/>
            <person name="Crossman L.C."/>
            <person name="Pitt T."/>
            <person name="Churcher C."/>
            <person name="Mungall K.L."/>
            <person name="Bentley S.D."/>
            <person name="Sebaihia M."/>
            <person name="Thomson N.R."/>
            <person name="Bason N."/>
            <person name="Beacham I.R."/>
            <person name="Brooks K."/>
            <person name="Brown K.A."/>
            <person name="Brown N.F."/>
            <person name="Challis G.L."/>
            <person name="Cherevach I."/>
            <person name="Chillingworth T."/>
            <person name="Cronin A."/>
            <person name="Crossett B."/>
            <person name="Davis P."/>
            <person name="DeShazer D."/>
            <person name="Feltwell T."/>
            <person name="Fraser A."/>
            <person name="Hance Z."/>
            <person name="Hauser H."/>
            <person name="Holroyd S."/>
            <person name="Jagels K."/>
            <person name="Keith K.E."/>
            <person name="Maddison M."/>
            <person name="Moule S."/>
            <person name="Price C."/>
            <person name="Quail M.A."/>
            <person name="Rabbinowitsch E."/>
            <person name="Rutherford K."/>
            <person name="Sanders M."/>
            <person name="Simmonds M."/>
            <person name="Songsivilai S."/>
            <person name="Stevens K."/>
            <person name="Tumapa S."/>
            <person name="Vesaratchavest M."/>
            <person name="Whitehead S."/>
            <person name="Yeats C."/>
            <person name="Barrell B.G."/>
            <person name="Oyston P.C.F."/>
            <person name="Parkhill J."/>
        </authorList>
    </citation>
    <scope>NUCLEOTIDE SEQUENCE [LARGE SCALE GENOMIC DNA]</scope>
    <source>
        <strain>K96243</strain>
    </source>
</reference>
<proteinExistence type="inferred from homology"/>
<name>Y2003_BURPS</name>
<gene>
    <name type="ordered locus">BPSL2003</name>
</gene>
<protein>
    <recommendedName>
        <fullName evidence="1">UPF0145 protein BPSL2003</fullName>
    </recommendedName>
</protein>
<dbReference type="EMBL" id="BX571965">
    <property type="protein sequence ID" value="CAH36002.1"/>
    <property type="molecule type" value="Genomic_DNA"/>
</dbReference>
<dbReference type="RefSeq" id="WP_004193399.1">
    <property type="nucleotide sequence ID" value="NZ_CP009538.1"/>
</dbReference>
<dbReference type="RefSeq" id="YP_108601.1">
    <property type="nucleotide sequence ID" value="NC_006350.1"/>
</dbReference>
<dbReference type="SMR" id="Q63TG5"/>
<dbReference type="STRING" id="272560.BPSL2003"/>
<dbReference type="KEGG" id="bps:BPSL2003"/>
<dbReference type="PATRIC" id="fig|272560.51.peg.4157"/>
<dbReference type="eggNOG" id="COG0393">
    <property type="taxonomic scope" value="Bacteria"/>
</dbReference>
<dbReference type="Proteomes" id="UP000000605">
    <property type="component" value="Chromosome 1"/>
</dbReference>
<dbReference type="Gene3D" id="3.30.110.70">
    <property type="entry name" value="Hypothetical protein apc22750. Chain B"/>
    <property type="match status" value="1"/>
</dbReference>
<dbReference type="HAMAP" id="MF_00338">
    <property type="entry name" value="UPF0145"/>
    <property type="match status" value="1"/>
</dbReference>
<dbReference type="InterPro" id="IPR035439">
    <property type="entry name" value="UPF0145_dom_sf"/>
</dbReference>
<dbReference type="InterPro" id="IPR002765">
    <property type="entry name" value="UPF0145_YbjQ-like"/>
</dbReference>
<dbReference type="PANTHER" id="PTHR34068:SF2">
    <property type="entry name" value="UPF0145 PROTEIN SCO3412"/>
    <property type="match status" value="1"/>
</dbReference>
<dbReference type="PANTHER" id="PTHR34068">
    <property type="entry name" value="UPF0145 PROTEIN YBJQ"/>
    <property type="match status" value="1"/>
</dbReference>
<dbReference type="Pfam" id="PF01906">
    <property type="entry name" value="YbjQ_1"/>
    <property type="match status" value="1"/>
</dbReference>
<dbReference type="SUPFAM" id="SSF117782">
    <property type="entry name" value="YbjQ-like"/>
    <property type="match status" value="1"/>
</dbReference>
<feature type="chain" id="PRO_0000225816" description="UPF0145 protein BPSL2003">
    <location>
        <begin position="1"/>
        <end position="111"/>
    </location>
</feature>
<accession>Q63TG5</accession>